<evidence type="ECO:0000255" key="1">
    <source>
        <dbReference type="HAMAP-Rule" id="MF_01361"/>
    </source>
</evidence>
<evidence type="ECO:0000305" key="2"/>
<organism>
    <name type="scientific">Haloarcula marismortui (strain ATCC 43049 / DSM 3752 / JCM 8966 / VKM B-1809)</name>
    <name type="common">Halobacterium marismortui</name>
    <dbReference type="NCBI Taxonomy" id="272569"/>
    <lineage>
        <taxon>Archaea</taxon>
        <taxon>Methanobacteriati</taxon>
        <taxon>Methanobacteriota</taxon>
        <taxon>Stenosarchaea group</taxon>
        <taxon>Halobacteria</taxon>
        <taxon>Halobacteriales</taxon>
        <taxon>Haloarculaceae</taxon>
        <taxon>Haloarcula</taxon>
    </lineage>
</organism>
<protein>
    <recommendedName>
        <fullName evidence="1">UPF0391 membrane protein rrnAC2507</fullName>
    </recommendedName>
</protein>
<accession>Q5UZJ2</accession>
<dbReference type="EMBL" id="AY596297">
    <property type="protein sequence ID" value="AAV47311.1"/>
    <property type="status" value="ALT_INIT"/>
    <property type="molecule type" value="Genomic_DNA"/>
</dbReference>
<dbReference type="STRING" id="272569.rrnAC2507"/>
<dbReference type="PaxDb" id="272569-rrnAC2507"/>
<dbReference type="EnsemblBacteria" id="AAV47311">
    <property type="protein sequence ID" value="AAV47311"/>
    <property type="gene ID" value="rrnAC2507"/>
</dbReference>
<dbReference type="KEGG" id="hma:rrnAC2507"/>
<dbReference type="PATRIC" id="fig|272569.17.peg.3116"/>
<dbReference type="eggNOG" id="arCOG08018">
    <property type="taxonomic scope" value="Archaea"/>
</dbReference>
<dbReference type="HOGENOM" id="CLU_187346_3_1_2"/>
<dbReference type="Proteomes" id="UP000001169">
    <property type="component" value="Chromosome I"/>
</dbReference>
<dbReference type="GO" id="GO:0005886">
    <property type="term" value="C:plasma membrane"/>
    <property type="evidence" value="ECO:0007669"/>
    <property type="project" value="UniProtKB-SubCell"/>
</dbReference>
<dbReference type="HAMAP" id="MF_01361">
    <property type="entry name" value="UPF0391"/>
    <property type="match status" value="1"/>
</dbReference>
<dbReference type="InterPro" id="IPR009760">
    <property type="entry name" value="DUF1328"/>
</dbReference>
<dbReference type="Pfam" id="PF07043">
    <property type="entry name" value="DUF1328"/>
    <property type="match status" value="1"/>
</dbReference>
<dbReference type="PIRSF" id="PIRSF036466">
    <property type="entry name" value="UCP036466"/>
    <property type="match status" value="1"/>
</dbReference>
<proteinExistence type="inferred from homology"/>
<gene>
    <name type="ordered locus">rrnAC2507</name>
</gene>
<feature type="chain" id="PRO_0000256812" description="UPF0391 membrane protein rrnAC2507">
    <location>
        <begin position="1"/>
        <end position="47"/>
    </location>
</feature>
<feature type="transmembrane region" description="Helical" evidence="1">
    <location>
        <begin position="5"/>
        <end position="25"/>
    </location>
</feature>
<feature type="transmembrane region" description="Helical" evidence="1">
    <location>
        <begin position="27"/>
        <end position="47"/>
    </location>
</feature>
<reference key="1">
    <citation type="journal article" date="2004" name="Genome Res.">
        <title>Genome sequence of Haloarcula marismortui: a halophilic archaeon from the Dead Sea.</title>
        <authorList>
            <person name="Baliga N.S."/>
            <person name="Bonneau R."/>
            <person name="Facciotti M.T."/>
            <person name="Pan M."/>
            <person name="Glusman G."/>
            <person name="Deutsch E.W."/>
            <person name="Shannon P."/>
            <person name="Chiu Y."/>
            <person name="Weng R.S."/>
            <person name="Gan R.R."/>
            <person name="Hung P."/>
            <person name="Date S.V."/>
            <person name="Marcotte E."/>
            <person name="Hood L."/>
            <person name="Ng W.V."/>
        </authorList>
    </citation>
    <scope>NUCLEOTIDE SEQUENCE [LARGE SCALE GENOMIC DNA]</scope>
    <source>
        <strain>ATCC 43049 / DSM 3752 / JCM 8966 / VKM B-1809</strain>
    </source>
</reference>
<name>Y2507_HALMA</name>
<keyword id="KW-1003">Cell membrane</keyword>
<keyword id="KW-0472">Membrane</keyword>
<keyword id="KW-1185">Reference proteome</keyword>
<keyword id="KW-0812">Transmembrane</keyword>
<keyword id="KW-1133">Transmembrane helix</keyword>
<comment type="subcellular location">
    <subcellularLocation>
        <location evidence="1">Cell membrane</location>
        <topology evidence="1">Multi-pass membrane protein</topology>
    </subcellularLocation>
</comment>
<comment type="similarity">
    <text evidence="1">Belongs to the UPF0391 family.</text>
</comment>
<comment type="sequence caution" evidence="2">
    <conflict type="erroneous initiation">
        <sequence resource="EMBL-CDS" id="AAV47311"/>
    </conflict>
</comment>
<sequence>MYYAVVLVILAVVAGIAGFRGIAGLSFRVAKFLIVIFLVLALVTFLL</sequence>